<keyword id="KW-0997">Cell inner membrane</keyword>
<keyword id="KW-1003">Cell membrane</keyword>
<keyword id="KW-0444">Lipid biosynthesis</keyword>
<keyword id="KW-0443">Lipid metabolism</keyword>
<keyword id="KW-0472">Membrane</keyword>
<keyword id="KW-0594">Phospholipid biosynthesis</keyword>
<keyword id="KW-1208">Phospholipid metabolism</keyword>
<keyword id="KW-1185">Reference proteome</keyword>
<keyword id="KW-0808">Transferase</keyword>
<keyword id="KW-0812">Transmembrane</keyword>
<keyword id="KW-1133">Transmembrane helix</keyword>
<proteinExistence type="inferred from homology"/>
<evidence type="ECO:0000255" key="1">
    <source>
        <dbReference type="HAMAP-Rule" id="MF_01043"/>
    </source>
</evidence>
<name>PLSY_BRUA2</name>
<accession>Q2YKM0</accession>
<reference key="1">
    <citation type="journal article" date="2005" name="Infect. Immun.">
        <title>Whole-genome analyses of speciation events in pathogenic Brucellae.</title>
        <authorList>
            <person name="Chain P.S."/>
            <person name="Comerci D.J."/>
            <person name="Tolmasky M.E."/>
            <person name="Larimer F.W."/>
            <person name="Malfatti S.A."/>
            <person name="Vergez L.M."/>
            <person name="Aguero F."/>
            <person name="Land M.L."/>
            <person name="Ugalde R.A."/>
            <person name="Garcia E."/>
        </authorList>
    </citation>
    <scope>NUCLEOTIDE SEQUENCE [LARGE SCALE GENOMIC DNA]</scope>
    <source>
        <strain>2308</strain>
    </source>
</reference>
<gene>
    <name evidence="1" type="primary">plsY</name>
    <name type="ordered locus">BAB2_0639</name>
</gene>
<organism>
    <name type="scientific">Brucella abortus (strain 2308)</name>
    <dbReference type="NCBI Taxonomy" id="359391"/>
    <lineage>
        <taxon>Bacteria</taxon>
        <taxon>Pseudomonadati</taxon>
        <taxon>Pseudomonadota</taxon>
        <taxon>Alphaproteobacteria</taxon>
        <taxon>Hyphomicrobiales</taxon>
        <taxon>Brucellaceae</taxon>
        <taxon>Brucella/Ochrobactrum group</taxon>
        <taxon>Brucella</taxon>
    </lineage>
</organism>
<feature type="chain" id="PRO_0000250287" description="Glycerol-3-phosphate acyltransferase">
    <location>
        <begin position="1"/>
        <end position="201"/>
    </location>
</feature>
<feature type="transmembrane region" description="Helical" evidence="1">
    <location>
        <begin position="10"/>
        <end position="30"/>
    </location>
</feature>
<feature type="transmembrane region" description="Helical" evidence="1">
    <location>
        <begin position="60"/>
        <end position="80"/>
    </location>
</feature>
<feature type="transmembrane region" description="Helical" evidence="1">
    <location>
        <begin position="86"/>
        <end position="106"/>
    </location>
</feature>
<feature type="transmembrane region" description="Helical" evidence="1">
    <location>
        <begin position="116"/>
        <end position="136"/>
    </location>
</feature>
<feature type="transmembrane region" description="Helical" evidence="1">
    <location>
        <begin position="166"/>
        <end position="186"/>
    </location>
</feature>
<protein>
    <recommendedName>
        <fullName evidence="1">Glycerol-3-phosphate acyltransferase</fullName>
    </recommendedName>
    <alternativeName>
        <fullName evidence="1">Acyl-PO4 G3P acyltransferase</fullName>
    </alternativeName>
    <alternativeName>
        <fullName evidence="1">Acyl-phosphate--glycerol-3-phosphate acyltransferase</fullName>
    </alternativeName>
    <alternativeName>
        <fullName evidence="1">G3P acyltransferase</fullName>
        <shortName evidence="1">GPAT</shortName>
        <ecNumber evidence="1">2.3.1.275</ecNumber>
    </alternativeName>
    <alternativeName>
        <fullName evidence="1">Lysophosphatidic acid synthase</fullName>
        <shortName evidence="1">LPA synthase</shortName>
    </alternativeName>
</protein>
<comment type="function">
    <text evidence="1">Catalyzes the transfer of an acyl group from acyl-phosphate (acyl-PO(4)) to glycerol-3-phosphate (G3P) to form lysophosphatidic acid (LPA). This enzyme utilizes acyl-phosphate as fatty acyl donor, but not acyl-CoA or acyl-ACP.</text>
</comment>
<comment type="catalytic activity">
    <reaction evidence="1">
        <text>an acyl phosphate + sn-glycerol 3-phosphate = a 1-acyl-sn-glycero-3-phosphate + phosphate</text>
        <dbReference type="Rhea" id="RHEA:34075"/>
        <dbReference type="ChEBI" id="CHEBI:43474"/>
        <dbReference type="ChEBI" id="CHEBI:57597"/>
        <dbReference type="ChEBI" id="CHEBI:57970"/>
        <dbReference type="ChEBI" id="CHEBI:59918"/>
        <dbReference type="EC" id="2.3.1.275"/>
    </reaction>
</comment>
<comment type="pathway">
    <text evidence="1">Lipid metabolism; phospholipid metabolism.</text>
</comment>
<comment type="subunit">
    <text evidence="1">Probably interacts with PlsX.</text>
</comment>
<comment type="subcellular location">
    <subcellularLocation>
        <location evidence="1">Cell inner membrane</location>
        <topology evidence="1">Multi-pass membrane protein</topology>
    </subcellularLocation>
</comment>
<comment type="similarity">
    <text evidence="1">Belongs to the PlsY family.</text>
</comment>
<sequence>MAEPGFFNAMLIGALIFGYVLGSIPFGLILTRLAGLGDVRAIGSGNIGATNVLRTGNKKLAAATLILDALKGTAAALIAAHFGQNAAIAAGFGAFIGHLFPVWIGFKGGKGVATYLGVLIGLAWAGALVFAAAWIVTALLTRYSSPSALVASLIVPIALYSRGNQALAALFAIMTVIVFIKHRANISRLLNGTESKIGAKG</sequence>
<dbReference type="EC" id="2.3.1.275" evidence="1"/>
<dbReference type="EMBL" id="AM040265">
    <property type="protein sequence ID" value="CAJ12805.1"/>
    <property type="molecule type" value="Genomic_DNA"/>
</dbReference>
<dbReference type="RefSeq" id="WP_002967292.1">
    <property type="nucleotide sequence ID" value="NZ_KN046823.1"/>
</dbReference>
<dbReference type="SMR" id="Q2YKM0"/>
<dbReference type="STRING" id="359391.BAB2_0639"/>
<dbReference type="GeneID" id="93015474"/>
<dbReference type="KEGG" id="bmf:BAB2_0639"/>
<dbReference type="HOGENOM" id="CLU_081254_1_0_5"/>
<dbReference type="PhylomeDB" id="Q2YKM0"/>
<dbReference type="UniPathway" id="UPA00085"/>
<dbReference type="Proteomes" id="UP000002719">
    <property type="component" value="Chromosome II"/>
</dbReference>
<dbReference type="GO" id="GO:0005886">
    <property type="term" value="C:plasma membrane"/>
    <property type="evidence" value="ECO:0007669"/>
    <property type="project" value="UniProtKB-SubCell"/>
</dbReference>
<dbReference type="GO" id="GO:0043772">
    <property type="term" value="F:acyl-phosphate glycerol-3-phosphate acyltransferase activity"/>
    <property type="evidence" value="ECO:0007669"/>
    <property type="project" value="UniProtKB-UniRule"/>
</dbReference>
<dbReference type="GO" id="GO:0008654">
    <property type="term" value="P:phospholipid biosynthetic process"/>
    <property type="evidence" value="ECO:0007669"/>
    <property type="project" value="UniProtKB-UniRule"/>
</dbReference>
<dbReference type="HAMAP" id="MF_01043">
    <property type="entry name" value="PlsY"/>
    <property type="match status" value="1"/>
</dbReference>
<dbReference type="InterPro" id="IPR003811">
    <property type="entry name" value="G3P_acylTferase_PlsY"/>
</dbReference>
<dbReference type="NCBIfam" id="TIGR00023">
    <property type="entry name" value="glycerol-3-phosphate 1-O-acyltransferase PlsY"/>
    <property type="match status" value="1"/>
</dbReference>
<dbReference type="PANTHER" id="PTHR30309:SF0">
    <property type="entry name" value="GLYCEROL-3-PHOSPHATE ACYLTRANSFERASE-RELATED"/>
    <property type="match status" value="1"/>
</dbReference>
<dbReference type="PANTHER" id="PTHR30309">
    <property type="entry name" value="INNER MEMBRANE PROTEIN YGIH"/>
    <property type="match status" value="1"/>
</dbReference>
<dbReference type="Pfam" id="PF02660">
    <property type="entry name" value="G3P_acyltransf"/>
    <property type="match status" value="1"/>
</dbReference>
<dbReference type="SMART" id="SM01207">
    <property type="entry name" value="G3P_acyltransf"/>
    <property type="match status" value="1"/>
</dbReference>